<keyword id="KW-0106">Calcium</keyword>
<keyword id="KW-0255">Endonuclease</keyword>
<keyword id="KW-0378">Hydrolase</keyword>
<keyword id="KW-0540">Nuclease</keyword>
<keyword id="KW-0964">Secreted</keyword>
<keyword id="KW-0732">Signal</keyword>
<protein>
    <recommendedName>
        <fullName>Thermonuclease</fullName>
        <shortName>TNase</shortName>
        <ecNumber>3.1.31.1</ecNumber>
    </recommendedName>
    <alternativeName>
        <fullName>Micrococcal nuclease</fullName>
    </alternativeName>
    <alternativeName>
        <fullName>Staphylococcal nuclease</fullName>
    </alternativeName>
</protein>
<name>NUC_STAHY</name>
<gene>
    <name type="primary">nucH</name>
</gene>
<evidence type="ECO:0000250" key="1"/>
<evidence type="ECO:0000255" key="2"/>
<evidence type="ECO:0000255" key="3">
    <source>
        <dbReference type="PROSITE-ProRule" id="PRU00272"/>
    </source>
</evidence>
<evidence type="ECO:0000255" key="4">
    <source>
        <dbReference type="PROSITE-ProRule" id="PRU10048"/>
    </source>
</evidence>
<evidence type="ECO:0000255" key="5">
    <source>
        <dbReference type="PROSITE-ProRule" id="PRU10049"/>
    </source>
</evidence>
<reference key="1">
    <citation type="journal article" date="1994" name="Gene">
        <title>Primary structure and biological features of a thermostable nuclease isolated from Staphylococcus hyicus.</title>
        <authorList>
            <person name="Chesneau O."/>
            <person name="el Solh N."/>
        </authorList>
    </citation>
    <scope>NUCLEOTIDE SEQUENCE [GENOMIC DNA]</scope>
    <source>
        <strain>E80</strain>
    </source>
</reference>
<sequence>MKKITTGLIIVVAAIIVLSIQFMTESGPFKSAGLSNANEQTYKVIRVIDGDTIIVDKDGKQQNLRMIGVDTPETVKPNTPVQPYGKEASDFTKRHLTNQKVRLEYDKQEKDRYGRTLAYVWLGKEMFNEKLAKEGLARAKFYRPNYKYQERIEQAQKQAQKLKKNIWSN</sequence>
<organism>
    <name type="scientific">Staphylococcus hyicus</name>
    <dbReference type="NCBI Taxonomy" id="1284"/>
    <lineage>
        <taxon>Bacteria</taxon>
        <taxon>Bacillati</taxon>
        <taxon>Bacillota</taxon>
        <taxon>Bacilli</taxon>
        <taxon>Bacillales</taxon>
        <taxon>Staphylococcaceae</taxon>
        <taxon>Staphylococcus</taxon>
    </lineage>
</organism>
<feature type="signal peptide" evidence="2">
    <location>
        <begin position="1"/>
        <end position="26"/>
    </location>
</feature>
<feature type="chain" id="PRO_0000034392" description="Thermonuclease">
    <location>
        <begin position="27"/>
        <end position="169"/>
    </location>
</feature>
<feature type="active site" evidence="1">
    <location>
        <position position="65"/>
    </location>
</feature>
<feature type="active site" evidence="1">
    <location>
        <position position="73"/>
    </location>
</feature>
<feature type="active site" evidence="1">
    <location>
        <position position="115"/>
    </location>
</feature>
<comment type="function">
    <text>Enzyme that catalyzes the hydrolysis of both DNA and RNA at the 5'-position of the phosphodiester bond.</text>
</comment>
<comment type="catalytic activity">
    <reaction evidence="4 5">
        <text>Endonucleolytic cleavage to nucleoside 3'-phosphates and 3'-phosphooligonucleotide end-products.</text>
        <dbReference type="EC" id="3.1.31.1"/>
    </reaction>
</comment>
<comment type="cofactor">
    <cofactor evidence="1">
        <name>Ca(2+)</name>
        <dbReference type="ChEBI" id="CHEBI:29108"/>
    </cofactor>
    <text evidence="1">Binds 1 Ca(2+) ion per subunit.</text>
</comment>
<comment type="biophysicochemical properties">
    <temperatureDependence>
        <text>Active at 37 degrees Celsius. Retains activity after heating at 100 degrees Celsius.</text>
    </temperatureDependence>
</comment>
<comment type="subcellular location">
    <subcellularLocation>
        <location>Secreted</location>
    </subcellularLocation>
</comment>
<comment type="similarity">
    <text evidence="3">Belongs to the thermonuclease family.</text>
</comment>
<accession>P43270</accession>
<dbReference type="EC" id="3.1.31.1"/>
<dbReference type="EMBL" id="L23973">
    <property type="protein sequence ID" value="AAA26661.1"/>
    <property type="molecule type" value="Genomic_DNA"/>
</dbReference>
<dbReference type="SMR" id="P43270"/>
<dbReference type="STRING" id="1284.SHYC_07780"/>
<dbReference type="GO" id="GO:0005576">
    <property type="term" value="C:extracellular region"/>
    <property type="evidence" value="ECO:0007669"/>
    <property type="project" value="UniProtKB-SubCell"/>
</dbReference>
<dbReference type="GO" id="GO:0016894">
    <property type="term" value="F:endonuclease activity, active with either ribo- or deoxyribonucleic acids and producing 3'-phosphomonoesters"/>
    <property type="evidence" value="ECO:0007669"/>
    <property type="project" value="UniProtKB-EC"/>
</dbReference>
<dbReference type="GO" id="GO:0003676">
    <property type="term" value="F:nucleic acid binding"/>
    <property type="evidence" value="ECO:0007669"/>
    <property type="project" value="InterPro"/>
</dbReference>
<dbReference type="CDD" id="cd00175">
    <property type="entry name" value="SNc"/>
    <property type="match status" value="1"/>
</dbReference>
<dbReference type="Gene3D" id="2.40.50.90">
    <property type="match status" value="1"/>
</dbReference>
<dbReference type="InterPro" id="IPR035437">
    <property type="entry name" value="SNase_OB-fold_sf"/>
</dbReference>
<dbReference type="InterPro" id="IPR016071">
    <property type="entry name" value="Staphylococal_nuclease_OB-fold"/>
</dbReference>
<dbReference type="InterPro" id="IPR002071">
    <property type="entry name" value="Thermonucl_AS"/>
</dbReference>
<dbReference type="NCBIfam" id="NF047694">
    <property type="entry name" value="TnucaseNucIStaph"/>
    <property type="match status" value="1"/>
</dbReference>
<dbReference type="PANTHER" id="PTHR12302">
    <property type="entry name" value="EBNA2 BINDING PROTEIN P100"/>
    <property type="match status" value="1"/>
</dbReference>
<dbReference type="PANTHER" id="PTHR12302:SF3">
    <property type="entry name" value="SERINE_THREONINE-PROTEIN KINASE 31"/>
    <property type="match status" value="1"/>
</dbReference>
<dbReference type="Pfam" id="PF00565">
    <property type="entry name" value="SNase"/>
    <property type="match status" value="1"/>
</dbReference>
<dbReference type="SMART" id="SM00318">
    <property type="entry name" value="SNc"/>
    <property type="match status" value="1"/>
</dbReference>
<dbReference type="SUPFAM" id="SSF50199">
    <property type="entry name" value="Staphylococcal nuclease"/>
    <property type="match status" value="1"/>
</dbReference>
<dbReference type="PROSITE" id="PS01123">
    <property type="entry name" value="TNASE_1"/>
    <property type="match status" value="1"/>
</dbReference>
<dbReference type="PROSITE" id="PS01284">
    <property type="entry name" value="TNASE_2"/>
    <property type="match status" value="1"/>
</dbReference>
<dbReference type="PROSITE" id="PS50830">
    <property type="entry name" value="TNASE_3"/>
    <property type="match status" value="1"/>
</dbReference>
<proteinExistence type="evidence at protein level"/>